<dbReference type="EC" id="2.7.7.6" evidence="1 4"/>
<dbReference type="EMBL" id="X14818">
    <property type="protein sequence ID" value="CAA32923.1"/>
    <property type="status" value="ALT_INIT"/>
    <property type="molecule type" value="Genomic_DNA"/>
</dbReference>
<dbReference type="EMBL" id="CP000077">
    <property type="protein sequence ID" value="AAY80074.1"/>
    <property type="molecule type" value="Genomic_DNA"/>
</dbReference>
<dbReference type="PIR" id="S04715">
    <property type="entry name" value="S04715"/>
</dbReference>
<dbReference type="RefSeq" id="WP_011277576.1">
    <property type="nucleotide sequence ID" value="NC_007181.1"/>
</dbReference>
<dbReference type="PDB" id="7OK0">
    <property type="method" value="EM"/>
    <property type="resolution" value="2.90 A"/>
    <property type="chains" value="H=1-84"/>
</dbReference>
<dbReference type="PDB" id="7OQ4">
    <property type="method" value="EM"/>
    <property type="resolution" value="3.27 A"/>
    <property type="chains" value="H=1-84"/>
</dbReference>
<dbReference type="PDB" id="7OQY">
    <property type="method" value="EM"/>
    <property type="resolution" value="2.61 A"/>
    <property type="chains" value="H=1-84"/>
</dbReference>
<dbReference type="PDBsum" id="7OK0"/>
<dbReference type="PDBsum" id="7OQ4"/>
<dbReference type="PDBsum" id="7OQY"/>
<dbReference type="EMDB" id="EMD-12960"/>
<dbReference type="EMDB" id="EMD-13026"/>
<dbReference type="EMDB" id="EMD-13034"/>
<dbReference type="SMR" id="P11521"/>
<dbReference type="STRING" id="330779.Saci_0694"/>
<dbReference type="GeneID" id="14551209"/>
<dbReference type="KEGG" id="sai:Saci_0694"/>
<dbReference type="PATRIC" id="fig|330779.12.peg.662"/>
<dbReference type="eggNOG" id="arCOG04258">
    <property type="taxonomic scope" value="Archaea"/>
</dbReference>
<dbReference type="HOGENOM" id="CLU_058320_4_0_2"/>
<dbReference type="BRENDA" id="2.7.7.6">
    <property type="organism ID" value="6160"/>
</dbReference>
<dbReference type="Proteomes" id="UP000001018">
    <property type="component" value="Chromosome"/>
</dbReference>
<dbReference type="GO" id="GO:0005737">
    <property type="term" value="C:cytoplasm"/>
    <property type="evidence" value="ECO:0007669"/>
    <property type="project" value="UniProtKB-SubCell"/>
</dbReference>
<dbReference type="GO" id="GO:0000428">
    <property type="term" value="C:DNA-directed RNA polymerase complex"/>
    <property type="evidence" value="ECO:0000314"/>
    <property type="project" value="UniProtKB"/>
</dbReference>
<dbReference type="GO" id="GO:0003677">
    <property type="term" value="F:DNA binding"/>
    <property type="evidence" value="ECO:0007669"/>
    <property type="project" value="InterPro"/>
</dbReference>
<dbReference type="GO" id="GO:0003899">
    <property type="term" value="F:DNA-directed RNA polymerase activity"/>
    <property type="evidence" value="ECO:0000314"/>
    <property type="project" value="UniProtKB"/>
</dbReference>
<dbReference type="GO" id="GO:0006351">
    <property type="term" value="P:DNA-templated transcription"/>
    <property type="evidence" value="ECO:0000314"/>
    <property type="project" value="UniProtKB"/>
</dbReference>
<dbReference type="GO" id="GO:0006366">
    <property type="term" value="P:transcription by RNA polymerase II"/>
    <property type="evidence" value="ECO:0007669"/>
    <property type="project" value="TreeGrafter"/>
</dbReference>
<dbReference type="GO" id="GO:0006362">
    <property type="term" value="P:transcription elongation by RNA polymerase I"/>
    <property type="evidence" value="ECO:0007669"/>
    <property type="project" value="TreeGrafter"/>
</dbReference>
<dbReference type="GO" id="GO:0042797">
    <property type="term" value="P:tRNA transcription by RNA polymerase III"/>
    <property type="evidence" value="ECO:0007669"/>
    <property type="project" value="TreeGrafter"/>
</dbReference>
<dbReference type="Gene3D" id="3.90.940.20">
    <property type="entry name" value="RPB5-like RNA polymerase subunit"/>
    <property type="match status" value="1"/>
</dbReference>
<dbReference type="HAMAP" id="MF_00025">
    <property type="entry name" value="RNApol_Rpo5_RPB5"/>
    <property type="match status" value="1"/>
</dbReference>
<dbReference type="InterPro" id="IPR014381">
    <property type="entry name" value="Arch_Rpo5/euc_Rpb5"/>
</dbReference>
<dbReference type="InterPro" id="IPR000783">
    <property type="entry name" value="RNA_pol_subH/Rpb5_C"/>
</dbReference>
<dbReference type="InterPro" id="IPR020608">
    <property type="entry name" value="RNA_pol_subH/Rpb5_CS"/>
</dbReference>
<dbReference type="InterPro" id="IPR035913">
    <property type="entry name" value="RPB5-like_sf"/>
</dbReference>
<dbReference type="NCBIfam" id="NF007129">
    <property type="entry name" value="PRK09570.1"/>
    <property type="match status" value="1"/>
</dbReference>
<dbReference type="PANTHER" id="PTHR10535">
    <property type="entry name" value="DNA-DIRECTED RNA POLYMERASES I, II, AND III SUBUNIT RPABC1"/>
    <property type="match status" value="1"/>
</dbReference>
<dbReference type="PANTHER" id="PTHR10535:SF0">
    <property type="entry name" value="DNA-DIRECTED RNA POLYMERASES I, II, AND III SUBUNIT RPABC1"/>
    <property type="match status" value="1"/>
</dbReference>
<dbReference type="Pfam" id="PF01191">
    <property type="entry name" value="RNA_pol_Rpb5_C"/>
    <property type="match status" value="1"/>
</dbReference>
<dbReference type="SUPFAM" id="SSF55287">
    <property type="entry name" value="RPB5-like RNA polymerase subunit"/>
    <property type="match status" value="1"/>
</dbReference>
<dbReference type="PROSITE" id="PS01110">
    <property type="entry name" value="RNA_POL_H_23KD"/>
    <property type="match status" value="1"/>
</dbReference>
<reference key="1">
    <citation type="journal article" date="1989" name="Nucleic Acids Res.">
        <title>Organization and nucleotide sequence of the genes encoding the large subunits A, B and C of the DNA-dependent RNA polymerase of the archaebacterium Sulfolobus acidocaldarius.</title>
        <authorList>
            <person name="Puehler G."/>
            <person name="Lottspeich F."/>
            <person name="Zillig W."/>
        </authorList>
    </citation>
    <scope>NUCLEOTIDE SEQUENCE [GENOMIC DNA]</scope>
    <source>
        <strain>ATCC 33909 / DSM 639 / JCM 8929 / NBRC 15157 / NCIMB 11770</strain>
    </source>
</reference>
<reference key="2">
    <citation type="journal article" date="2005" name="J. Bacteriol.">
        <title>The genome of Sulfolobus acidocaldarius, a model organism of the Crenarchaeota.</title>
        <authorList>
            <person name="Chen L."/>
            <person name="Bruegger K."/>
            <person name="Skovgaard M."/>
            <person name="Redder P."/>
            <person name="She Q."/>
            <person name="Torarinsson E."/>
            <person name="Greve B."/>
            <person name="Awayez M."/>
            <person name="Zibat A."/>
            <person name="Klenk H.-P."/>
            <person name="Garrett R.A."/>
        </authorList>
    </citation>
    <scope>NUCLEOTIDE SEQUENCE [LARGE SCALE GENOMIC DNA]</scope>
    <source>
        <strain>ATCC 33909 / DSM 639 / JCM 8929 / NBRC 15157 / NCIMB 11770</strain>
    </source>
</reference>
<reference key="3">
    <citation type="journal article" date="1992" name="Proc. Natl. Acad. Sci. U.S.A.">
        <title>Component H of the DNA-dependent RNA polymerases of Archaea is homologous to a subunit shared by the three eucaryal nuclear RNA polymerases.</title>
        <authorList>
            <person name="Klenk H.-P."/>
            <person name="Palm P."/>
            <person name="Lottspeich F."/>
            <person name="Zillig W."/>
        </authorList>
    </citation>
    <scope>PROTEIN SEQUENCE OF 1-8</scope>
    <scope>SUBUNIT</scope>
    <source>
        <strain>ATCC 33909 / DSM 639 / JCM 8929 / NBRC 15157 / NCIMB 11770</strain>
    </source>
</reference>
<reference key="4">
    <citation type="journal article" date="1994" name="Syst. Appl. Microbiol.">
        <title>Structure and Function of the DNA-Dependent RNA Polymerase of Sulfolobus.</title>
        <authorList>
            <person name="Lanzendorfer M."/>
            <person name="Langer D."/>
            <person name="Hain J."/>
            <person name="Klenk H.-P."/>
            <person name="Holz I."/>
            <person name="Arnold-Ammer I."/>
            <person name="Zillig W."/>
        </authorList>
    </citation>
    <scope>FUNCTION</scope>
    <scope>CATALYTIC ACTIVITY</scope>
    <scope>SUBUNIT</scope>
    <source>
        <strain>ATCC 33909 / DSM 639 / JCM 8929 / NBRC 15157 / NCIMB 11770</strain>
    </source>
</reference>
<reference evidence="8 9 10" key="5">
    <citation type="journal article" date="2021" name="Nat. Commun.">
        <title>Structural basis of RNA polymerase inhibition by viral and host factors.</title>
        <authorList>
            <person name="Pilotto S."/>
            <person name="Fouqueau T."/>
            <person name="Lukoyanova N."/>
            <person name="Sheppard C."/>
            <person name="Lucas-Staat S."/>
            <person name="Diaz-Santin L.M."/>
            <person name="Matelska D."/>
            <person name="Prangishvili D."/>
            <person name="Cheung A.C.M."/>
            <person name="Werner F."/>
        </authorList>
    </citation>
    <scope>STRUCTURE BY ELECTRON MICROSCOPY (2.61 ANGSTROMS) OF RNAP WITH AND WITHOUT INHIBITORS</scope>
    <scope>SUBUNIT</scope>
    <source>
        <strain>ATCC 33909 / DSM 639 / JCM 8929 / NBRC 15157 / NCIMB 11770</strain>
    </source>
</reference>
<proteinExistence type="evidence at protein level"/>
<organism>
    <name type="scientific">Sulfolobus acidocaldarius (strain ATCC 33909 / DSM 639 / JCM 8929 / NBRC 15157 / NCIMB 11770)</name>
    <dbReference type="NCBI Taxonomy" id="330779"/>
    <lineage>
        <taxon>Archaea</taxon>
        <taxon>Thermoproteota</taxon>
        <taxon>Thermoprotei</taxon>
        <taxon>Sulfolobales</taxon>
        <taxon>Sulfolobaceae</taxon>
        <taxon>Sulfolobus</taxon>
    </lineage>
</organism>
<evidence type="ECO:0000255" key="1">
    <source>
        <dbReference type="HAMAP-Rule" id="MF_00025"/>
    </source>
</evidence>
<evidence type="ECO:0000269" key="2">
    <source>
    </source>
</evidence>
<evidence type="ECO:0000269" key="3">
    <source>
    </source>
</evidence>
<evidence type="ECO:0000269" key="4">
    <source ref="4"/>
</evidence>
<evidence type="ECO:0000303" key="5">
    <source>
    </source>
</evidence>
<evidence type="ECO:0000303" key="6">
    <source>
    </source>
</evidence>
<evidence type="ECO:0000305" key="7"/>
<evidence type="ECO:0000312" key="8">
    <source>
        <dbReference type="PDB" id="7OK0"/>
    </source>
</evidence>
<evidence type="ECO:0000312" key="9">
    <source>
        <dbReference type="PDB" id="7OQ4"/>
    </source>
</evidence>
<evidence type="ECO:0000312" key="10">
    <source>
        <dbReference type="PDB" id="7OQY"/>
    </source>
</evidence>
<evidence type="ECO:0007829" key="11">
    <source>
        <dbReference type="PDB" id="7OQ4"/>
    </source>
</evidence>
<evidence type="ECO:0007829" key="12">
    <source>
        <dbReference type="PDB" id="7OQY"/>
    </source>
</evidence>
<keyword id="KW-0002">3D-structure</keyword>
<keyword id="KW-0963">Cytoplasm</keyword>
<keyword id="KW-0903">Direct protein sequencing</keyword>
<keyword id="KW-0240">DNA-directed RNA polymerase</keyword>
<keyword id="KW-0548">Nucleotidyltransferase</keyword>
<keyword id="KW-1185">Reference proteome</keyword>
<keyword id="KW-0804">Transcription</keyword>
<keyword id="KW-0808">Transferase</keyword>
<comment type="function">
    <text evidence="1">DNA-dependent RNA polymerase (RNAP) catalyzes the transcription of DNA into RNA using the four ribonucleoside triphosphates as substrates.</text>
</comment>
<comment type="function">
    <text evidence="4">Reconstitution experiments show this subunit is required for basic activity.</text>
</comment>
<comment type="catalytic activity">
    <reaction evidence="1 4">
        <text>RNA(n) + a ribonucleoside 5'-triphosphate = RNA(n+1) + diphosphate</text>
        <dbReference type="Rhea" id="RHEA:21248"/>
        <dbReference type="Rhea" id="RHEA-COMP:14527"/>
        <dbReference type="Rhea" id="RHEA-COMP:17342"/>
        <dbReference type="ChEBI" id="CHEBI:33019"/>
        <dbReference type="ChEBI" id="CHEBI:61557"/>
        <dbReference type="ChEBI" id="CHEBI:140395"/>
        <dbReference type="EC" id="2.7.7.6"/>
    </reaction>
</comment>
<comment type="subunit">
    <text evidence="2 3 4 8 9 10">Part of the 13-subunit RNA polymerase.</text>
</comment>
<comment type="subcellular location">
    <subcellularLocation>
        <location evidence="1">Cytoplasm</location>
    </subcellularLocation>
</comment>
<comment type="similarity">
    <text evidence="1 5">Belongs to the archaeal Rpo5/eukaryotic RPB5 RNA polymerase subunit family.</text>
</comment>
<comment type="sequence caution" evidence="7">
    <conflict type="erroneous initiation">
        <sequence resource="EMBL-CDS" id="CAA32923"/>
    </conflict>
    <text>Extended N-terminus.</text>
</comment>
<accession>P11521</accession>
<accession>Q4JAV5</accession>
<protein>
    <recommendedName>
        <fullName evidence="1">DNA-directed RNA polymerase subunit Rpo5</fullName>
        <ecNumber evidence="1 4">2.7.7.6</ecNumber>
    </recommendedName>
    <alternativeName>
        <fullName evidence="1">DNA-directed RNA polymerase subunit H</fullName>
    </alternativeName>
</protein>
<name>RPO5_SULAC</name>
<sequence>MRSSSKKKIDISNHELVPKHEILQLEEAYKLVKELGIKPEQLPWIRASDPVAKSIGAKPGDIIKITRKSPFTGESVTYRYVITG</sequence>
<gene>
    <name evidence="1" type="primary">rpo5</name>
    <name evidence="6" type="synonym">rpoB''</name>
    <name evidence="1 5" type="synonym">rpoH</name>
    <name type="ordered locus">Saci_0694</name>
</gene>
<feature type="chain" id="PRO_0000146103" description="DNA-directed RNA polymerase subunit Rpo5">
    <location>
        <begin position="1"/>
        <end position="84"/>
    </location>
</feature>
<feature type="strand" evidence="11">
    <location>
        <begin position="14"/>
        <end position="17"/>
    </location>
</feature>
<feature type="strand" evidence="12">
    <location>
        <begin position="19"/>
        <end position="22"/>
    </location>
</feature>
<feature type="helix" evidence="12">
    <location>
        <begin position="25"/>
        <end position="35"/>
    </location>
</feature>
<feature type="helix" evidence="12">
    <location>
        <begin position="39"/>
        <end position="41"/>
    </location>
</feature>
<feature type="strand" evidence="12">
    <location>
        <begin position="44"/>
        <end position="46"/>
    </location>
</feature>
<feature type="helix" evidence="12">
    <location>
        <begin position="50"/>
        <end position="55"/>
    </location>
</feature>
<feature type="strand" evidence="12">
    <location>
        <begin position="62"/>
        <end position="69"/>
    </location>
</feature>
<feature type="turn" evidence="12">
    <location>
        <begin position="70"/>
        <end position="72"/>
    </location>
</feature>
<feature type="strand" evidence="12">
    <location>
        <begin position="73"/>
        <end position="82"/>
    </location>
</feature>